<sequence>MFLNTIQPAVGATHAGRRVGRGIGSGLGKTGGRGHKGQKSRSGGFHKVGFEGGQMPLQRRLPKRGFKSLTASANAQLRLSELESIAVNEIDILVLKQAGLIASTVSNVKVIAFGEISKAVALKGIKVTKGARAAIEAVGGKIEM</sequence>
<protein>
    <recommendedName>
        <fullName evidence="1">Large ribosomal subunit protein uL15</fullName>
    </recommendedName>
    <alternativeName>
        <fullName evidence="3">50S ribosomal protein L15</fullName>
    </alternativeName>
</protein>
<keyword id="KW-0687">Ribonucleoprotein</keyword>
<keyword id="KW-0689">Ribosomal protein</keyword>
<keyword id="KW-0694">RNA-binding</keyword>
<keyword id="KW-0699">rRNA-binding</keyword>
<dbReference type="EMBL" id="AL157959">
    <property type="protein sequence ID" value="CAM07428.1"/>
    <property type="molecule type" value="Genomic_DNA"/>
</dbReference>
<dbReference type="PIR" id="D82003">
    <property type="entry name" value="D82003"/>
</dbReference>
<dbReference type="RefSeq" id="WP_010981047.1">
    <property type="nucleotide sequence ID" value="NC_003116.1"/>
</dbReference>
<dbReference type="SMR" id="Q9JX15"/>
<dbReference type="EnsemblBacteria" id="CAM07428">
    <property type="protein sequence ID" value="CAM07428"/>
    <property type="gene ID" value="NMA0110"/>
</dbReference>
<dbReference type="KEGG" id="nma:NMA0110"/>
<dbReference type="HOGENOM" id="CLU_055188_4_2_4"/>
<dbReference type="Proteomes" id="UP000000626">
    <property type="component" value="Chromosome"/>
</dbReference>
<dbReference type="GO" id="GO:0022625">
    <property type="term" value="C:cytosolic large ribosomal subunit"/>
    <property type="evidence" value="ECO:0007669"/>
    <property type="project" value="TreeGrafter"/>
</dbReference>
<dbReference type="GO" id="GO:0019843">
    <property type="term" value="F:rRNA binding"/>
    <property type="evidence" value="ECO:0007669"/>
    <property type="project" value="UniProtKB-UniRule"/>
</dbReference>
<dbReference type="GO" id="GO:0003735">
    <property type="term" value="F:structural constituent of ribosome"/>
    <property type="evidence" value="ECO:0007669"/>
    <property type="project" value="InterPro"/>
</dbReference>
<dbReference type="GO" id="GO:0006412">
    <property type="term" value="P:translation"/>
    <property type="evidence" value="ECO:0007669"/>
    <property type="project" value="UniProtKB-UniRule"/>
</dbReference>
<dbReference type="Gene3D" id="3.100.10.10">
    <property type="match status" value="1"/>
</dbReference>
<dbReference type="HAMAP" id="MF_01341">
    <property type="entry name" value="Ribosomal_uL15"/>
    <property type="match status" value="1"/>
</dbReference>
<dbReference type="InterPro" id="IPR030878">
    <property type="entry name" value="Ribosomal_uL15"/>
</dbReference>
<dbReference type="InterPro" id="IPR021131">
    <property type="entry name" value="Ribosomal_uL15/eL18"/>
</dbReference>
<dbReference type="InterPro" id="IPR036227">
    <property type="entry name" value="Ribosomal_uL15/eL18_sf"/>
</dbReference>
<dbReference type="InterPro" id="IPR005749">
    <property type="entry name" value="Ribosomal_uL15_bac-type"/>
</dbReference>
<dbReference type="InterPro" id="IPR001196">
    <property type="entry name" value="Ribosomal_uL15_CS"/>
</dbReference>
<dbReference type="NCBIfam" id="TIGR01071">
    <property type="entry name" value="rplO_bact"/>
    <property type="match status" value="1"/>
</dbReference>
<dbReference type="PANTHER" id="PTHR12934">
    <property type="entry name" value="50S RIBOSOMAL PROTEIN L15"/>
    <property type="match status" value="1"/>
</dbReference>
<dbReference type="PANTHER" id="PTHR12934:SF11">
    <property type="entry name" value="LARGE RIBOSOMAL SUBUNIT PROTEIN UL15M"/>
    <property type="match status" value="1"/>
</dbReference>
<dbReference type="Pfam" id="PF00828">
    <property type="entry name" value="Ribosomal_L27A"/>
    <property type="match status" value="1"/>
</dbReference>
<dbReference type="SUPFAM" id="SSF52080">
    <property type="entry name" value="Ribosomal proteins L15p and L18e"/>
    <property type="match status" value="1"/>
</dbReference>
<dbReference type="PROSITE" id="PS00475">
    <property type="entry name" value="RIBOSOMAL_L15"/>
    <property type="match status" value="1"/>
</dbReference>
<reference key="1">
    <citation type="journal article" date="2000" name="Nature">
        <title>Complete DNA sequence of a serogroup A strain of Neisseria meningitidis Z2491.</title>
        <authorList>
            <person name="Parkhill J."/>
            <person name="Achtman M."/>
            <person name="James K.D."/>
            <person name="Bentley S.D."/>
            <person name="Churcher C.M."/>
            <person name="Klee S.R."/>
            <person name="Morelli G."/>
            <person name="Basham D."/>
            <person name="Brown D."/>
            <person name="Chillingworth T."/>
            <person name="Davies R.M."/>
            <person name="Davis P."/>
            <person name="Devlin K."/>
            <person name="Feltwell T."/>
            <person name="Hamlin N."/>
            <person name="Holroyd S."/>
            <person name="Jagels K."/>
            <person name="Leather S."/>
            <person name="Moule S."/>
            <person name="Mungall K.L."/>
            <person name="Quail M.A."/>
            <person name="Rajandream M.A."/>
            <person name="Rutherford K.M."/>
            <person name="Simmonds M."/>
            <person name="Skelton J."/>
            <person name="Whitehead S."/>
            <person name="Spratt B.G."/>
            <person name="Barrell B.G."/>
        </authorList>
    </citation>
    <scope>NUCLEOTIDE SEQUENCE [LARGE SCALE GENOMIC DNA]</scope>
    <source>
        <strain>DSM 15465 / Z2491</strain>
    </source>
</reference>
<name>RL15_NEIMA</name>
<organism>
    <name type="scientific">Neisseria meningitidis serogroup A / serotype 4A (strain DSM 15465 / Z2491)</name>
    <dbReference type="NCBI Taxonomy" id="122587"/>
    <lineage>
        <taxon>Bacteria</taxon>
        <taxon>Pseudomonadati</taxon>
        <taxon>Pseudomonadota</taxon>
        <taxon>Betaproteobacteria</taxon>
        <taxon>Neisseriales</taxon>
        <taxon>Neisseriaceae</taxon>
        <taxon>Neisseria</taxon>
    </lineage>
</organism>
<comment type="function">
    <text evidence="1">Binds to the 23S rRNA.</text>
</comment>
<comment type="subunit">
    <text evidence="1">Part of the 50S ribosomal subunit.</text>
</comment>
<comment type="similarity">
    <text evidence="1">Belongs to the universal ribosomal protein uL15 family.</text>
</comment>
<accession>Q9JX15</accession>
<accession>A1INX1</accession>
<feature type="chain" id="PRO_0000104769" description="Large ribosomal subunit protein uL15">
    <location>
        <begin position="1"/>
        <end position="144"/>
    </location>
</feature>
<feature type="region of interest" description="Disordered" evidence="2">
    <location>
        <begin position="20"/>
        <end position="49"/>
    </location>
</feature>
<feature type="compositionally biased region" description="Gly residues" evidence="2">
    <location>
        <begin position="21"/>
        <end position="31"/>
    </location>
</feature>
<evidence type="ECO:0000255" key="1">
    <source>
        <dbReference type="HAMAP-Rule" id="MF_01341"/>
    </source>
</evidence>
<evidence type="ECO:0000256" key="2">
    <source>
        <dbReference type="SAM" id="MobiDB-lite"/>
    </source>
</evidence>
<evidence type="ECO:0000305" key="3"/>
<gene>
    <name evidence="1" type="primary">rplO</name>
    <name type="ordered locus">NMA0110</name>
</gene>
<proteinExistence type="inferred from homology"/>